<gene>
    <name type="primary">ATG33</name>
    <name type="ordered locus">KLTH0G18172g</name>
</gene>
<reference key="1">
    <citation type="journal article" date="2009" name="Genome Res.">
        <title>Comparative genomics of protoploid Saccharomycetaceae.</title>
        <authorList>
            <consortium name="The Genolevures Consortium"/>
            <person name="Souciet J.-L."/>
            <person name="Dujon B."/>
            <person name="Gaillardin C."/>
            <person name="Johnston M."/>
            <person name="Baret P.V."/>
            <person name="Cliften P."/>
            <person name="Sherman D.J."/>
            <person name="Weissenbach J."/>
            <person name="Westhof E."/>
            <person name="Wincker P."/>
            <person name="Jubin C."/>
            <person name="Poulain J."/>
            <person name="Barbe V."/>
            <person name="Segurens B."/>
            <person name="Artiguenave F."/>
            <person name="Anthouard V."/>
            <person name="Vacherie B."/>
            <person name="Val M.-E."/>
            <person name="Fulton R.S."/>
            <person name="Minx P."/>
            <person name="Wilson R."/>
            <person name="Durrens P."/>
            <person name="Jean G."/>
            <person name="Marck C."/>
            <person name="Martin T."/>
            <person name="Nikolski M."/>
            <person name="Rolland T."/>
            <person name="Seret M.-L."/>
            <person name="Casaregola S."/>
            <person name="Despons L."/>
            <person name="Fairhead C."/>
            <person name="Fischer G."/>
            <person name="Lafontaine I."/>
            <person name="Leh V."/>
            <person name="Lemaire M."/>
            <person name="de Montigny J."/>
            <person name="Neuveglise C."/>
            <person name="Thierry A."/>
            <person name="Blanc-Lenfle I."/>
            <person name="Bleykasten C."/>
            <person name="Diffels J."/>
            <person name="Fritsch E."/>
            <person name="Frangeul L."/>
            <person name="Goeffon A."/>
            <person name="Jauniaux N."/>
            <person name="Kachouri-Lafond R."/>
            <person name="Payen C."/>
            <person name="Potier S."/>
            <person name="Pribylova L."/>
            <person name="Ozanne C."/>
            <person name="Richard G.-F."/>
            <person name="Sacerdot C."/>
            <person name="Straub M.-L."/>
            <person name="Talla E."/>
        </authorList>
    </citation>
    <scope>NUCLEOTIDE SEQUENCE [LARGE SCALE GENOMIC DNA]</scope>
    <source>
        <strain>ATCC 56472 / CBS 6340 / NRRL Y-8284</strain>
    </source>
</reference>
<organism>
    <name type="scientific">Lachancea thermotolerans (strain ATCC 56472 / CBS 6340 / NRRL Y-8284)</name>
    <name type="common">Yeast</name>
    <name type="synonym">Kluyveromyces thermotolerans</name>
    <dbReference type="NCBI Taxonomy" id="559295"/>
    <lineage>
        <taxon>Eukaryota</taxon>
        <taxon>Fungi</taxon>
        <taxon>Dikarya</taxon>
        <taxon>Ascomycota</taxon>
        <taxon>Saccharomycotina</taxon>
        <taxon>Saccharomycetes</taxon>
        <taxon>Saccharomycetales</taxon>
        <taxon>Saccharomycetaceae</taxon>
        <taxon>Lachancea</taxon>
    </lineage>
</organism>
<protein>
    <recommendedName>
        <fullName>Autophagy-related protein 33</fullName>
    </recommendedName>
</protein>
<feature type="chain" id="PRO_0000399767" description="Autophagy-related protein 33">
    <location>
        <begin position="1"/>
        <end position="206"/>
    </location>
</feature>
<feature type="transmembrane region" description="Helical" evidence="2">
    <location>
        <begin position="13"/>
        <end position="35"/>
    </location>
</feature>
<feature type="transmembrane region" description="Helical" evidence="2">
    <location>
        <begin position="51"/>
        <end position="71"/>
    </location>
</feature>
<feature type="transmembrane region" description="Helical" evidence="2">
    <location>
        <begin position="77"/>
        <end position="97"/>
    </location>
</feature>
<feature type="transmembrane region" description="Helical" evidence="2">
    <location>
        <begin position="181"/>
        <end position="201"/>
    </location>
</feature>
<dbReference type="EMBL" id="CU928171">
    <property type="protein sequence ID" value="CAR25378.1"/>
    <property type="molecule type" value="Genomic_DNA"/>
</dbReference>
<dbReference type="RefSeq" id="XP_002555815.1">
    <property type="nucleotide sequence ID" value="XM_002555769.1"/>
</dbReference>
<dbReference type="FunCoup" id="C5DNL7">
    <property type="interactions" value="139"/>
</dbReference>
<dbReference type="GeneID" id="8294110"/>
<dbReference type="KEGG" id="lth:KLTH0G18172g"/>
<dbReference type="eggNOG" id="ENOG502S27M">
    <property type="taxonomic scope" value="Eukaryota"/>
</dbReference>
<dbReference type="HOGENOM" id="CLU_105986_1_0_1"/>
<dbReference type="InParanoid" id="C5DNL7"/>
<dbReference type="OMA" id="HANCNAS"/>
<dbReference type="OrthoDB" id="5336366at2759"/>
<dbReference type="Proteomes" id="UP000002036">
    <property type="component" value="Chromosome G"/>
</dbReference>
<dbReference type="GO" id="GO:0005741">
    <property type="term" value="C:mitochondrial outer membrane"/>
    <property type="evidence" value="ECO:0007669"/>
    <property type="project" value="TreeGrafter"/>
</dbReference>
<dbReference type="GO" id="GO:0000422">
    <property type="term" value="P:autophagy of mitochondrion"/>
    <property type="evidence" value="ECO:0007669"/>
    <property type="project" value="TreeGrafter"/>
</dbReference>
<dbReference type="GO" id="GO:0016236">
    <property type="term" value="P:macroautophagy"/>
    <property type="evidence" value="ECO:0007669"/>
    <property type="project" value="TreeGrafter"/>
</dbReference>
<dbReference type="InterPro" id="IPR051668">
    <property type="entry name" value="ATG33"/>
</dbReference>
<dbReference type="PANTHER" id="PTHR37278">
    <property type="entry name" value="AUTOPHAGY-RELATED PROTEIN 33-RELATED"/>
    <property type="match status" value="1"/>
</dbReference>
<dbReference type="PANTHER" id="PTHR37278:SF1">
    <property type="entry name" value="AUTOPHAGY-RELATED PROTEIN 33-RELATED"/>
    <property type="match status" value="1"/>
</dbReference>
<evidence type="ECO:0000250" key="1"/>
<evidence type="ECO:0000255" key="2"/>
<evidence type="ECO:0000305" key="3"/>
<comment type="function">
    <text evidence="1">Involved in the selective degradation of mitochondria via autophagy during starvation and at post-log phase.</text>
</comment>
<comment type="subcellular location">
    <subcellularLocation>
        <location evidence="3">Mitochondrion membrane</location>
        <topology evidence="3">Multi-pass membrane protein</topology>
    </subcellularLocation>
</comment>
<comment type="similarity">
    <text evidence="3">Belongs to the ATG33 family.</text>
</comment>
<proteinExistence type="inferred from homology"/>
<keyword id="KW-0072">Autophagy</keyword>
<keyword id="KW-0472">Membrane</keyword>
<keyword id="KW-0496">Mitochondrion</keyword>
<keyword id="KW-1185">Reference proteome</keyword>
<keyword id="KW-0812">Transmembrane</keyword>
<keyword id="KW-1133">Transmembrane helix</keyword>
<accession>C5DNL7</accession>
<sequence>MSVCLAVTKTVAVSSLGIYCGMLTSACVASYAAPVDVLTQLAKPARVIARVGGALAAVSSAFFALSYFGAPAHWRHPYLLYGMLVAPVSAAYVAVVARVRGAHCRRACEKRRAQSASVHASTPASAAPEPALDDSVVDLGAAAAAAESAPETHVTSAEHVPVSHHVTPASAACARAAARHAAVLLLPAAAGLLGSVLGLYGEGLFV</sequence>
<name>ATG33_LACTC</name>